<proteinExistence type="inferred from homology"/>
<comment type="function">
    <text evidence="1">Specifically methylates the N4 position of cytidine in position 1402 (C1402) of 16S rRNA.</text>
</comment>
<comment type="catalytic activity">
    <reaction evidence="1">
        <text>cytidine(1402) in 16S rRNA + S-adenosyl-L-methionine = N(4)-methylcytidine(1402) in 16S rRNA + S-adenosyl-L-homocysteine + H(+)</text>
        <dbReference type="Rhea" id="RHEA:42928"/>
        <dbReference type="Rhea" id="RHEA-COMP:10286"/>
        <dbReference type="Rhea" id="RHEA-COMP:10287"/>
        <dbReference type="ChEBI" id="CHEBI:15378"/>
        <dbReference type="ChEBI" id="CHEBI:57856"/>
        <dbReference type="ChEBI" id="CHEBI:59789"/>
        <dbReference type="ChEBI" id="CHEBI:74506"/>
        <dbReference type="ChEBI" id="CHEBI:82748"/>
        <dbReference type="EC" id="2.1.1.199"/>
    </reaction>
</comment>
<comment type="subcellular location">
    <subcellularLocation>
        <location evidence="1">Cytoplasm</location>
    </subcellularLocation>
</comment>
<comment type="similarity">
    <text evidence="1">Belongs to the methyltransferase superfamily. RsmH family.</text>
</comment>
<keyword id="KW-0963">Cytoplasm</keyword>
<keyword id="KW-0489">Methyltransferase</keyword>
<keyword id="KW-0698">rRNA processing</keyword>
<keyword id="KW-0949">S-adenosyl-L-methionine</keyword>
<keyword id="KW-0808">Transferase</keyword>
<sequence>MFNHVTVLLKETVDGLDIKPDGTYVDCTLGGGGHSSYLLSQLTEGGRLIAFDQDEIAIQNAKEKFSSYGEQFITVKSNFRYLSEKLQELGITEVDGILFDLGVSSPQLDTPERGFSYHHDAPLDMRMDQDAPLTAYDVVNSWSYEQLVRIFFQYGEEKFSKQIARKIEAYRENKAIETTGELVELIKEGIPAPARRTGGHPAKRVFQAIRIAVNDELKVFEEALESAIEMVKPGGRVSVITFHSLEDRICKTTFKRNSTTPQLPPGLPIIPDEFKPKLKLITRKPILPSDIELEENNRARSAKLRIAEKR</sequence>
<name>RSMH_BACC3</name>
<dbReference type="EC" id="2.1.1.199" evidence="1"/>
<dbReference type="EMBL" id="CP001407">
    <property type="protein sequence ID" value="ACO30965.1"/>
    <property type="molecule type" value="Genomic_DNA"/>
</dbReference>
<dbReference type="RefSeq" id="WP_000481786.1">
    <property type="nucleotide sequence ID" value="NZ_CP009318.1"/>
</dbReference>
<dbReference type="SMR" id="C1EPT2"/>
<dbReference type="GeneID" id="45023747"/>
<dbReference type="KEGG" id="bcx:BCA_4022"/>
<dbReference type="PATRIC" id="fig|572264.18.peg.3975"/>
<dbReference type="Proteomes" id="UP000002210">
    <property type="component" value="Chromosome"/>
</dbReference>
<dbReference type="GO" id="GO:0005737">
    <property type="term" value="C:cytoplasm"/>
    <property type="evidence" value="ECO:0007669"/>
    <property type="project" value="UniProtKB-SubCell"/>
</dbReference>
<dbReference type="GO" id="GO:0071424">
    <property type="term" value="F:rRNA (cytosine-N4-)-methyltransferase activity"/>
    <property type="evidence" value="ECO:0007669"/>
    <property type="project" value="UniProtKB-UniRule"/>
</dbReference>
<dbReference type="GO" id="GO:0070475">
    <property type="term" value="P:rRNA base methylation"/>
    <property type="evidence" value="ECO:0007669"/>
    <property type="project" value="UniProtKB-UniRule"/>
</dbReference>
<dbReference type="FunFam" id="1.10.150.170:FF:000001">
    <property type="entry name" value="Ribosomal RNA small subunit methyltransferase H"/>
    <property type="match status" value="1"/>
</dbReference>
<dbReference type="Gene3D" id="1.10.150.170">
    <property type="entry name" value="Putative methyltransferase TM0872, insert domain"/>
    <property type="match status" value="1"/>
</dbReference>
<dbReference type="Gene3D" id="3.40.50.150">
    <property type="entry name" value="Vaccinia Virus protein VP39"/>
    <property type="match status" value="1"/>
</dbReference>
<dbReference type="HAMAP" id="MF_01007">
    <property type="entry name" value="16SrRNA_methyltr_H"/>
    <property type="match status" value="1"/>
</dbReference>
<dbReference type="InterPro" id="IPR002903">
    <property type="entry name" value="RsmH"/>
</dbReference>
<dbReference type="InterPro" id="IPR023397">
    <property type="entry name" value="SAM-dep_MeTrfase_MraW_recog"/>
</dbReference>
<dbReference type="InterPro" id="IPR029063">
    <property type="entry name" value="SAM-dependent_MTases_sf"/>
</dbReference>
<dbReference type="NCBIfam" id="TIGR00006">
    <property type="entry name" value="16S rRNA (cytosine(1402)-N(4))-methyltransferase RsmH"/>
    <property type="match status" value="1"/>
</dbReference>
<dbReference type="PANTHER" id="PTHR11265:SF0">
    <property type="entry name" value="12S RRNA N4-METHYLCYTIDINE METHYLTRANSFERASE"/>
    <property type="match status" value="1"/>
</dbReference>
<dbReference type="PANTHER" id="PTHR11265">
    <property type="entry name" value="S-ADENOSYL-METHYLTRANSFERASE MRAW"/>
    <property type="match status" value="1"/>
</dbReference>
<dbReference type="Pfam" id="PF01795">
    <property type="entry name" value="Methyltransf_5"/>
    <property type="match status" value="1"/>
</dbReference>
<dbReference type="PIRSF" id="PIRSF004486">
    <property type="entry name" value="MraW"/>
    <property type="match status" value="1"/>
</dbReference>
<dbReference type="SUPFAM" id="SSF81799">
    <property type="entry name" value="Putative methyltransferase TM0872, insert domain"/>
    <property type="match status" value="1"/>
</dbReference>
<dbReference type="SUPFAM" id="SSF53335">
    <property type="entry name" value="S-adenosyl-L-methionine-dependent methyltransferases"/>
    <property type="match status" value="1"/>
</dbReference>
<organism>
    <name type="scientific">Bacillus cereus (strain 03BB102)</name>
    <dbReference type="NCBI Taxonomy" id="572264"/>
    <lineage>
        <taxon>Bacteria</taxon>
        <taxon>Bacillati</taxon>
        <taxon>Bacillota</taxon>
        <taxon>Bacilli</taxon>
        <taxon>Bacillales</taxon>
        <taxon>Bacillaceae</taxon>
        <taxon>Bacillus</taxon>
        <taxon>Bacillus cereus group</taxon>
    </lineage>
</organism>
<feature type="chain" id="PRO_0000386728" description="Ribosomal RNA small subunit methyltransferase H">
    <location>
        <begin position="1"/>
        <end position="310"/>
    </location>
</feature>
<feature type="binding site" evidence="1">
    <location>
        <begin position="32"/>
        <end position="34"/>
    </location>
    <ligand>
        <name>S-adenosyl-L-methionine</name>
        <dbReference type="ChEBI" id="CHEBI:59789"/>
    </ligand>
</feature>
<feature type="binding site" evidence="1">
    <location>
        <position position="52"/>
    </location>
    <ligand>
        <name>S-adenosyl-L-methionine</name>
        <dbReference type="ChEBI" id="CHEBI:59789"/>
    </ligand>
</feature>
<feature type="binding site" evidence="1">
    <location>
        <position position="79"/>
    </location>
    <ligand>
        <name>S-adenosyl-L-methionine</name>
        <dbReference type="ChEBI" id="CHEBI:59789"/>
    </ligand>
</feature>
<feature type="binding site" evidence="1">
    <location>
        <position position="100"/>
    </location>
    <ligand>
        <name>S-adenosyl-L-methionine</name>
        <dbReference type="ChEBI" id="CHEBI:59789"/>
    </ligand>
</feature>
<feature type="binding site" evidence="1">
    <location>
        <position position="107"/>
    </location>
    <ligand>
        <name>S-adenosyl-L-methionine</name>
        <dbReference type="ChEBI" id="CHEBI:59789"/>
    </ligand>
</feature>
<reference key="1">
    <citation type="submission" date="2009-02" db="EMBL/GenBank/DDBJ databases">
        <title>Genome sequence of Bacillus cereus 03BB102.</title>
        <authorList>
            <person name="Dodson R.J."/>
            <person name="Jackson P."/>
            <person name="Munk A.C."/>
            <person name="Brettin T."/>
            <person name="Bruce D."/>
            <person name="Detter C."/>
            <person name="Tapia R."/>
            <person name="Han C."/>
            <person name="Sutton G."/>
            <person name="Sims D."/>
        </authorList>
    </citation>
    <scope>NUCLEOTIDE SEQUENCE [LARGE SCALE GENOMIC DNA]</scope>
    <source>
        <strain>03BB102</strain>
    </source>
</reference>
<evidence type="ECO:0000255" key="1">
    <source>
        <dbReference type="HAMAP-Rule" id="MF_01007"/>
    </source>
</evidence>
<protein>
    <recommendedName>
        <fullName evidence="1">Ribosomal RNA small subunit methyltransferase H</fullName>
        <ecNumber evidence="1">2.1.1.199</ecNumber>
    </recommendedName>
    <alternativeName>
        <fullName evidence="1">16S rRNA m(4)C1402 methyltransferase</fullName>
    </alternativeName>
    <alternativeName>
        <fullName evidence="1">rRNA (cytosine-N(4)-)-methyltransferase RsmH</fullName>
    </alternativeName>
</protein>
<accession>C1EPT2</accession>
<gene>
    <name evidence="1" type="primary">rsmH</name>
    <name type="synonym">mraW</name>
    <name type="ordered locus">BCA_4022</name>
</gene>